<protein>
    <recommendedName>
        <fullName evidence="8">Integrin beta-8</fullName>
    </recommendedName>
</protein>
<proteinExistence type="evidence at protein level"/>
<sequence>MCGSALAFLTAALLSLHNCQRGPALVLGAAWVFSLVLGLGQSEHNRCGSANVVSCARCLQLGPECGWCVQEDFVSGGSGSERCDTVSSLISKGCPVDSIEYLSVHVVTSSENEINTQVTPGEVSVQLHPGAEANFMLKVRPLKKYPVDLYYLVDVSASMHNNIEKLNSVGNDLSKKMALYSRDFRLGFGSYVDKTVSPYISIHPERIHNQCSDYNLDCMPPHGYIHVLSLTENITEFEKAVHRQKISGNIDTPEGGFDAMLQAAVCESHIGWRKEAKRLLLVMTDQTSHLALDSKLAGIVVPNDGNCHLKNNVYVKSTTMEHPSLGQLSEKLIDNNINVIFAVQGKQFHWYKDLLPLLPGAIAGEIESKAANLNNLVVEAYKKIISEVKVQLENQVHGVHFNITAICPDGARKPGISGCGNVTSNDEVLFNVTVVMKTCDIMGGKNYAIIKPIGFNETTKVHIHRSCSCQCENHRGLKGQCAEAAPDPKCPQCDDSRCHFDEDQFPSETCKPQEDQPVCSGRGVCICGKCLCHKTKLGRVYGQYCEKDDFSCPYLHGDVCAGHGECEGGRCQCFSGWEGDRCQCPSASAQHCVNSKGQVCSGRGTCVCGRCECTDPRSIGRLCEHCPTCHLSCSENWNCLQCLHPHNLSQAALDQCKSSCAVMEQHRMDQTSECLSGPSYLRIFFIIFIVTFLIGLLKVLIIRQVILQWNNNKIKSSSDYRMSASKKDKLILQSVCTRAVTYRREKPEEIKMDISKLNAQEAFRCNF</sequence>
<name>ITB8_MOUSE</name>
<keyword id="KW-0106">Calcium</keyword>
<keyword id="KW-0130">Cell adhesion</keyword>
<keyword id="KW-1003">Cell membrane</keyword>
<keyword id="KW-1015">Disulfide bond</keyword>
<keyword id="KW-0245">EGF-like domain</keyword>
<keyword id="KW-0325">Glycoprotein</keyword>
<keyword id="KW-0401">Integrin</keyword>
<keyword id="KW-0460">Magnesium</keyword>
<keyword id="KW-0472">Membrane</keyword>
<keyword id="KW-0479">Metal-binding</keyword>
<keyword id="KW-1185">Reference proteome</keyword>
<keyword id="KW-0677">Repeat</keyword>
<keyword id="KW-0732">Signal</keyword>
<keyword id="KW-0812">Transmembrane</keyword>
<keyword id="KW-1133">Transmembrane helix</keyword>
<reference key="1">
    <citation type="journal article" date="2009" name="PLoS Biol.">
        <title>Lineage-specific biology revealed by a finished genome assembly of the mouse.</title>
        <authorList>
            <person name="Church D.M."/>
            <person name="Goodstadt L."/>
            <person name="Hillier L.W."/>
            <person name="Zody M.C."/>
            <person name="Goldstein S."/>
            <person name="She X."/>
            <person name="Bult C.J."/>
            <person name="Agarwala R."/>
            <person name="Cherry J.L."/>
            <person name="DiCuccio M."/>
            <person name="Hlavina W."/>
            <person name="Kapustin Y."/>
            <person name="Meric P."/>
            <person name="Maglott D."/>
            <person name="Birtle Z."/>
            <person name="Marques A.C."/>
            <person name="Graves T."/>
            <person name="Zhou S."/>
            <person name="Teague B."/>
            <person name="Potamousis K."/>
            <person name="Churas C."/>
            <person name="Place M."/>
            <person name="Herschleb J."/>
            <person name="Runnheim R."/>
            <person name="Forrest D."/>
            <person name="Amos-Landgraf J."/>
            <person name="Schwartz D.C."/>
            <person name="Cheng Z."/>
            <person name="Lindblad-Toh K."/>
            <person name="Eichler E.E."/>
            <person name="Ponting C.P."/>
        </authorList>
    </citation>
    <scope>NUCLEOTIDE SEQUENCE [LARGE SCALE GENOMIC DNA]</scope>
    <source>
        <strain>C57BL/6J</strain>
    </source>
</reference>
<reference key="2">
    <citation type="journal article" date="2004" name="Genome Res.">
        <title>The status, quality, and expansion of the NIH full-length cDNA project: the Mammalian Gene Collection (MGC).</title>
        <authorList>
            <consortium name="The MGC Project Team"/>
        </authorList>
    </citation>
    <scope>NUCLEOTIDE SEQUENCE [LARGE SCALE MRNA]</scope>
    <source>
        <tissue>Brain</tissue>
    </source>
</reference>
<reference key="3">
    <citation type="journal article" date="2002" name="Development">
        <title>beta8 integrins are required for vascular morphogenesis in mouse embryos.</title>
        <authorList>
            <person name="Zhu J."/>
            <person name="Motejlek K."/>
            <person name="Wang D."/>
            <person name="Zang K."/>
            <person name="Schmidt A."/>
            <person name="Reichardt L.F."/>
        </authorList>
    </citation>
    <scope>FUNCTION</scope>
    <scope>DISRUPTION PHENOTYPE</scope>
    <scope>TISSUE SPECIFICITY</scope>
</reference>
<reference key="4">
    <citation type="journal article" date="2005" name="J. Neurosci.">
        <title>Vascular development of the brain requires beta8 integrin expression in the neuroepithelium.</title>
        <authorList>
            <person name="Proctor J.M."/>
            <person name="Zang K."/>
            <person name="Wang D."/>
            <person name="Wang R."/>
            <person name="Reichardt L.F."/>
        </authorList>
    </citation>
    <scope>FUNCTION</scope>
    <scope>DISRUPTION PHENOTYPE</scope>
</reference>
<reference key="5">
    <citation type="journal article" date="2014" name="J. Immunol.">
        <title>Release of active TGF-beta1 from the latent TGF-beta1/GARP complex on T regulatory cells is mediated by integrin beta8.</title>
        <authorList>
            <person name="Edwards J.P."/>
            <person name="Thornton A.M."/>
            <person name="Shevach E.M."/>
        </authorList>
    </citation>
    <scope>FUNCTION</scope>
    <scope>INTERACTION WITH ITGAV</scope>
</reference>
<accession>Q0VBD0</accession>
<feature type="signal peptide" evidence="3">
    <location>
        <begin position="1"/>
        <end position="21"/>
    </location>
</feature>
<feature type="chain" id="PRO_5015296953" description="Integrin beta-8" evidence="3">
    <location>
        <begin position="22"/>
        <end position="767"/>
    </location>
</feature>
<feature type="topological domain" description="Extracellular" evidence="8">
    <location>
        <begin position="22"/>
        <end position="681"/>
    </location>
</feature>
<feature type="transmembrane region" description="Helical" evidence="3">
    <location>
        <begin position="682"/>
        <end position="702"/>
    </location>
</feature>
<feature type="topological domain" description="Cytoplasmic" evidence="8">
    <location>
        <begin position="703"/>
        <end position="767"/>
    </location>
</feature>
<feature type="domain" description="PSI" evidence="3">
    <location>
        <begin position="46"/>
        <end position="95"/>
    </location>
</feature>
<feature type="domain" description="VWFA" evidence="2">
    <location>
        <begin position="146"/>
        <end position="384"/>
    </location>
</feature>
<feature type="domain" description="I-EGF 1" evidence="8">
    <location>
        <begin position="471"/>
        <end position="494"/>
    </location>
</feature>
<feature type="domain" description="I-EGF 2" evidence="4">
    <location>
        <begin position="498"/>
        <end position="546"/>
    </location>
</feature>
<feature type="domain" description="I-EGF 3" evidence="4">
    <location>
        <begin position="547"/>
        <end position="583"/>
    </location>
</feature>
<feature type="domain" description="I-EGF 4" evidence="4">
    <location>
        <begin position="584"/>
        <end position="624"/>
    </location>
</feature>
<feature type="binding site" description="in MIDAS binding site" evidence="2">
    <location>
        <position position="154"/>
    </location>
    <ligand>
        <name>Mg(2+)</name>
        <dbReference type="ChEBI" id="CHEBI:18420"/>
    </ligand>
</feature>
<feature type="binding site" description="in MIDAS binding site" evidence="2">
    <location>
        <position position="156"/>
    </location>
    <ligand>
        <name>Mg(2+)</name>
        <dbReference type="ChEBI" id="CHEBI:18420"/>
    </ligand>
</feature>
<feature type="binding site" description="in LIMBS binding site" evidence="2">
    <location>
        <position position="193"/>
    </location>
    <ligand>
        <name>Ca(2+)</name>
        <dbReference type="ChEBI" id="CHEBI:29108"/>
    </ligand>
</feature>
<feature type="binding site" description="in LIMBS binding site" evidence="2">
    <location>
        <position position="249"/>
    </location>
    <ligand>
        <name>Ca(2+)</name>
        <dbReference type="ChEBI" id="CHEBI:29108"/>
    </ligand>
</feature>
<feature type="binding site" description="in LIMBS binding site" evidence="2">
    <location>
        <position position="251"/>
    </location>
    <ligand>
        <name>Ca(2+)</name>
        <dbReference type="ChEBI" id="CHEBI:29108"/>
    </ligand>
</feature>
<feature type="binding site" description="in LIMBS binding site" evidence="2">
    <location>
        <position position="253"/>
    </location>
    <ligand>
        <name>Ca(2+)</name>
        <dbReference type="ChEBI" id="CHEBI:29108"/>
    </ligand>
</feature>
<feature type="binding site" description="in LIMBS binding site" evidence="2">
    <location>
        <position position="254"/>
    </location>
    <ligand>
        <name>Ca(2+)</name>
        <dbReference type="ChEBI" id="CHEBI:29108"/>
    </ligand>
</feature>
<feature type="binding site" description="in MIDAS binding site" evidence="2">
    <location>
        <position position="254"/>
    </location>
    <ligand>
        <name>Mg(2+)</name>
        <dbReference type="ChEBI" id="CHEBI:18420"/>
    </ligand>
</feature>
<feature type="glycosylation site" description="N-linked (GlcNAc...) asparagine" evidence="3">
    <location>
        <position position="233"/>
    </location>
</feature>
<feature type="glycosylation site" description="N-linked (GlcNAc...) asparagine" evidence="3">
    <location>
        <position position="402"/>
    </location>
</feature>
<feature type="glycosylation site" description="N-linked (GlcNAc...) asparagine" evidence="3">
    <location>
        <position position="421"/>
    </location>
</feature>
<feature type="glycosylation site" description="N-linked (GlcNAc...) asparagine" evidence="3">
    <location>
        <position position="431"/>
    </location>
</feature>
<feature type="glycosylation site" description="N-linked (GlcNAc...) asparagine" evidence="3">
    <location>
        <position position="456"/>
    </location>
</feature>
<feature type="glycosylation site" description="N-linked (GlcNAc...) asparagine" evidence="3">
    <location>
        <position position="647"/>
    </location>
</feature>
<feature type="disulfide bond" evidence="1">
    <location>
        <begin position="47"/>
        <end position="65"/>
    </location>
</feature>
<feature type="disulfide bond" evidence="1">
    <location>
        <begin position="55"/>
        <end position="469"/>
    </location>
</feature>
<feature type="disulfide bond" evidence="1">
    <location>
        <begin position="58"/>
        <end position="83"/>
    </location>
</feature>
<feature type="disulfide bond" evidence="1">
    <location>
        <begin position="68"/>
        <end position="94"/>
    </location>
</feature>
<feature type="disulfide bond" evidence="2">
    <location>
        <begin position="211"/>
        <end position="218"/>
    </location>
</feature>
<feature type="disulfide bond" evidence="2">
    <location>
        <begin position="266"/>
        <end position="307"/>
    </location>
</feature>
<feature type="disulfide bond" evidence="2">
    <location>
        <begin position="407"/>
        <end position="419"/>
    </location>
</feature>
<feature type="disulfide bond" evidence="2">
    <location>
        <begin position="439"/>
        <end position="467"/>
    </location>
</feature>
<feature type="disulfide bond" evidence="1">
    <location>
        <begin position="471"/>
        <end position="493"/>
    </location>
</feature>
<feature type="disulfide bond" evidence="8">
    <location>
        <begin position="471"/>
        <end position="490"/>
    </location>
</feature>
<feature type="disulfide bond" evidence="8">
    <location>
        <begin position="481"/>
        <end position="493"/>
    </location>
</feature>
<feature type="disulfide bond" evidence="4">
    <location>
        <begin position="498"/>
        <end position="527"/>
    </location>
</feature>
<feature type="disulfide bond" evidence="4">
    <location>
        <begin position="510"/>
        <end position="525"/>
    </location>
</feature>
<feature type="disulfide bond" evidence="4">
    <location>
        <begin position="519"/>
        <end position="530"/>
    </location>
</feature>
<feature type="disulfide bond" evidence="4">
    <location>
        <begin position="532"/>
        <end position="545"/>
    </location>
</feature>
<feature type="disulfide bond" evidence="4">
    <location>
        <begin position="552"/>
        <end position="566"/>
    </location>
</feature>
<feature type="disulfide bond" evidence="4">
    <location>
        <begin position="560"/>
        <end position="571"/>
    </location>
</feature>
<feature type="disulfide bond" evidence="4">
    <location>
        <begin position="573"/>
        <end position="582"/>
    </location>
</feature>
<feature type="disulfide bond" evidence="4">
    <location>
        <begin position="584"/>
        <end position="608"/>
    </location>
</feature>
<feature type="disulfide bond" evidence="4">
    <location>
        <begin position="592"/>
        <end position="606"/>
    </location>
</feature>
<feature type="disulfide bond" evidence="4">
    <location>
        <begin position="600"/>
        <end position="611"/>
    </location>
</feature>
<feature type="disulfide bond" evidence="4">
    <location>
        <begin position="613"/>
        <end position="623"/>
    </location>
</feature>
<feature type="disulfide bond" evidence="1">
    <location>
        <begin position="626"/>
        <end position="629"/>
    </location>
</feature>
<feature type="disulfide bond" evidence="1">
    <location>
        <begin position="633"/>
        <end position="660"/>
    </location>
</feature>
<feature type="disulfide bond" evidence="1">
    <location>
        <begin position="639"/>
        <end position="656"/>
    </location>
</feature>
<dbReference type="EMBL" id="AC140349">
    <property type="status" value="NOT_ANNOTATED_CDS"/>
    <property type="molecule type" value="Genomic_DNA"/>
</dbReference>
<dbReference type="EMBL" id="AC142263">
    <property type="status" value="NOT_ANNOTATED_CDS"/>
    <property type="molecule type" value="Genomic_DNA"/>
</dbReference>
<dbReference type="EMBL" id="BC120691">
    <property type="protein sequence ID" value="AAI20692.1"/>
    <property type="molecule type" value="mRNA"/>
</dbReference>
<dbReference type="EMBL" id="BC125343">
    <property type="protein sequence ID" value="AAI25344.1"/>
    <property type="molecule type" value="mRNA"/>
</dbReference>
<dbReference type="CCDS" id="CCDS36580.1"/>
<dbReference type="RefSeq" id="NP_796264.2">
    <property type="nucleotide sequence ID" value="NM_177290.3"/>
</dbReference>
<dbReference type="SMR" id="Q0VBD0"/>
<dbReference type="ComplexPortal" id="CPX-3133">
    <property type="entry name" value="Integrin alphav-beta8 complex"/>
</dbReference>
<dbReference type="FunCoup" id="Q0VBD0">
    <property type="interactions" value="639"/>
</dbReference>
<dbReference type="STRING" id="10090.ENSMUSP00000026360"/>
<dbReference type="GlyConnect" id="2407">
    <property type="glycosylation" value="4 N-Linked glycans (2 sites)"/>
</dbReference>
<dbReference type="GlyCosmos" id="Q0VBD0">
    <property type="glycosylation" value="6 sites, 4 glycans"/>
</dbReference>
<dbReference type="GlyGen" id="Q0VBD0">
    <property type="glycosylation" value="8 sites, 8 N-linked glycans (5 sites), 1 O-linked glycan (1 site)"/>
</dbReference>
<dbReference type="iPTMnet" id="Q0VBD0"/>
<dbReference type="PhosphoSitePlus" id="Q0VBD0"/>
<dbReference type="SwissPalm" id="Q0VBD0"/>
<dbReference type="PaxDb" id="10090-ENSMUSP00000026360"/>
<dbReference type="PeptideAtlas" id="Q0VBD0"/>
<dbReference type="ProteomicsDB" id="343273"/>
<dbReference type="ABCD" id="Q0VBD0">
    <property type="antibodies" value="1 sequenced antibody"/>
</dbReference>
<dbReference type="Antibodypedia" id="25377">
    <property type="antibodies" value="187 antibodies from 29 providers"/>
</dbReference>
<dbReference type="DNASU" id="320910"/>
<dbReference type="Ensembl" id="ENSMUST00000026360.9">
    <property type="protein sequence ID" value="ENSMUSP00000026360.9"/>
    <property type="gene ID" value="ENSMUSG00000025321.15"/>
</dbReference>
<dbReference type="GeneID" id="320910"/>
<dbReference type="KEGG" id="mmu:320910"/>
<dbReference type="UCSC" id="uc007pik.1">
    <property type="organism name" value="mouse"/>
</dbReference>
<dbReference type="AGR" id="MGI:1338035"/>
<dbReference type="CTD" id="3696"/>
<dbReference type="MGI" id="MGI:1338035">
    <property type="gene designation" value="Itgb8"/>
</dbReference>
<dbReference type="VEuPathDB" id="HostDB:ENSMUSG00000025321"/>
<dbReference type="eggNOG" id="KOG1226">
    <property type="taxonomic scope" value="Eukaryota"/>
</dbReference>
<dbReference type="GeneTree" id="ENSGT01110000267169"/>
<dbReference type="HOGENOM" id="CLU_011772_3_1_1"/>
<dbReference type="InParanoid" id="Q0VBD0"/>
<dbReference type="OMA" id="NCRRGPA"/>
<dbReference type="OrthoDB" id="410592at2759"/>
<dbReference type="PhylomeDB" id="Q0VBD0"/>
<dbReference type="TreeFam" id="TF105392"/>
<dbReference type="Reactome" id="R-MMU-2129379">
    <property type="pathway name" value="Molecules associated with elastic fibres"/>
</dbReference>
<dbReference type="Reactome" id="R-MMU-216083">
    <property type="pathway name" value="Integrin cell surface interactions"/>
</dbReference>
<dbReference type="Reactome" id="R-MMU-2173789">
    <property type="pathway name" value="TGF-beta receptor signaling activates SMADs"/>
</dbReference>
<dbReference type="BioGRID-ORCS" id="320910">
    <property type="hits" value="3 hits in 79 CRISPR screens"/>
</dbReference>
<dbReference type="PRO" id="PR:Q0VBD0"/>
<dbReference type="Proteomes" id="UP000000589">
    <property type="component" value="Chromosome 12"/>
</dbReference>
<dbReference type="RNAct" id="Q0VBD0">
    <property type="molecule type" value="protein"/>
</dbReference>
<dbReference type="Bgee" id="ENSMUSG00000025321">
    <property type="expression patterns" value="Expressed in pigmented layer of retina and 207 other cell types or tissues"/>
</dbReference>
<dbReference type="GO" id="GO:0009986">
    <property type="term" value="C:cell surface"/>
    <property type="evidence" value="ECO:0007669"/>
    <property type="project" value="Ensembl"/>
</dbReference>
<dbReference type="GO" id="GO:0034686">
    <property type="term" value="C:integrin alphav-beta8 complex"/>
    <property type="evidence" value="ECO:0000314"/>
    <property type="project" value="UniProtKB"/>
</dbReference>
<dbReference type="GO" id="GO:1990430">
    <property type="term" value="F:extracellular matrix protein binding"/>
    <property type="evidence" value="ECO:0007669"/>
    <property type="project" value="Ensembl"/>
</dbReference>
<dbReference type="GO" id="GO:0046872">
    <property type="term" value="F:metal ion binding"/>
    <property type="evidence" value="ECO:0007669"/>
    <property type="project" value="UniProtKB-KW"/>
</dbReference>
<dbReference type="GO" id="GO:0051216">
    <property type="term" value="P:cartilage development"/>
    <property type="evidence" value="ECO:0007669"/>
    <property type="project" value="Ensembl"/>
</dbReference>
<dbReference type="GO" id="GO:0007160">
    <property type="term" value="P:cell-matrix adhesion"/>
    <property type="evidence" value="ECO:0000303"/>
    <property type="project" value="ComplexPortal"/>
</dbReference>
<dbReference type="GO" id="GO:0001573">
    <property type="term" value="P:ganglioside metabolic process"/>
    <property type="evidence" value="ECO:0000315"/>
    <property type="project" value="MGI"/>
</dbReference>
<dbReference type="GO" id="GO:0060022">
    <property type="term" value="P:hard palate development"/>
    <property type="evidence" value="ECO:0000316"/>
    <property type="project" value="MGI"/>
</dbReference>
<dbReference type="GO" id="GO:0006955">
    <property type="term" value="P:immune response"/>
    <property type="evidence" value="ECO:0000316"/>
    <property type="project" value="MGI"/>
</dbReference>
<dbReference type="GO" id="GO:0007229">
    <property type="term" value="P:integrin-mediated signaling pathway"/>
    <property type="evidence" value="ECO:0000266"/>
    <property type="project" value="ComplexPortal"/>
</dbReference>
<dbReference type="GO" id="GO:0061520">
    <property type="term" value="P:Langerhans cell differentiation"/>
    <property type="evidence" value="ECO:0000316"/>
    <property type="project" value="MGI"/>
</dbReference>
<dbReference type="GO" id="GO:0010629">
    <property type="term" value="P:negative regulation of gene expression"/>
    <property type="evidence" value="ECO:0007669"/>
    <property type="project" value="Ensembl"/>
</dbReference>
<dbReference type="GO" id="GO:0045766">
    <property type="term" value="P:positive regulation of angiogenesis"/>
    <property type="evidence" value="ECO:0007669"/>
    <property type="project" value="Ensembl"/>
</dbReference>
<dbReference type="GO" id="GO:0010628">
    <property type="term" value="P:positive regulation of gene expression"/>
    <property type="evidence" value="ECO:0007669"/>
    <property type="project" value="Ensembl"/>
</dbReference>
<dbReference type="GO" id="GO:0009615">
    <property type="term" value="P:response to virus"/>
    <property type="evidence" value="ECO:0000316"/>
    <property type="project" value="MGI"/>
</dbReference>
<dbReference type="GO" id="GO:0007179">
    <property type="term" value="P:transforming growth factor beta receptor signaling pathway"/>
    <property type="evidence" value="ECO:0000316"/>
    <property type="project" value="MGI"/>
</dbReference>
<dbReference type="GO" id="GO:0001570">
    <property type="term" value="P:vasculogenesis"/>
    <property type="evidence" value="ECO:0000250"/>
    <property type="project" value="UniProtKB"/>
</dbReference>
<dbReference type="FunFam" id="2.10.25.10:FF:000076">
    <property type="entry name" value="Integrin beta"/>
    <property type="match status" value="1"/>
</dbReference>
<dbReference type="FunFam" id="2.10.25.10:FF:000370">
    <property type="entry name" value="Integrin beta"/>
    <property type="match status" value="1"/>
</dbReference>
<dbReference type="FunFam" id="2.60.40.1510:FF:000010">
    <property type="entry name" value="Integrin beta"/>
    <property type="match status" value="1"/>
</dbReference>
<dbReference type="FunFam" id="3.30.1680.10:FF:000002">
    <property type="entry name" value="Integrin beta"/>
    <property type="match status" value="1"/>
</dbReference>
<dbReference type="FunFam" id="3.40.50.410:FF:000002">
    <property type="entry name" value="Integrin beta"/>
    <property type="match status" value="1"/>
</dbReference>
<dbReference type="Gene3D" id="2.10.25.10">
    <property type="entry name" value="Laminin"/>
    <property type="match status" value="3"/>
</dbReference>
<dbReference type="Gene3D" id="3.30.1680.10">
    <property type="entry name" value="ligand-binding face of the semaphorins, domain 2"/>
    <property type="match status" value="1"/>
</dbReference>
<dbReference type="Gene3D" id="2.60.40.1510">
    <property type="entry name" value="ntegrin, alpha v. Chain A, domain 3"/>
    <property type="match status" value="1"/>
</dbReference>
<dbReference type="Gene3D" id="3.40.50.410">
    <property type="entry name" value="von Willebrand factor, type A domain"/>
    <property type="match status" value="1"/>
</dbReference>
<dbReference type="InterPro" id="IPR000742">
    <property type="entry name" value="EGF-like_dom"/>
</dbReference>
<dbReference type="InterPro" id="IPR013111">
    <property type="entry name" value="EGF_extracell"/>
</dbReference>
<dbReference type="InterPro" id="IPR033760">
    <property type="entry name" value="Integrin_beta_N"/>
</dbReference>
<dbReference type="InterPro" id="IPR015812">
    <property type="entry name" value="Integrin_bsu"/>
</dbReference>
<dbReference type="InterPro" id="IPR002369">
    <property type="entry name" value="Integrin_bsu_VWA"/>
</dbReference>
<dbReference type="InterPro" id="IPR032695">
    <property type="entry name" value="Integrin_dom_sf"/>
</dbReference>
<dbReference type="InterPro" id="IPR016201">
    <property type="entry name" value="PSI"/>
</dbReference>
<dbReference type="InterPro" id="IPR036465">
    <property type="entry name" value="vWFA_dom_sf"/>
</dbReference>
<dbReference type="PANTHER" id="PTHR10082">
    <property type="entry name" value="INTEGRIN BETA SUBUNIT"/>
    <property type="match status" value="1"/>
</dbReference>
<dbReference type="PANTHER" id="PTHR10082:SF9">
    <property type="entry name" value="INTEGRIN BETA-8"/>
    <property type="match status" value="1"/>
</dbReference>
<dbReference type="Pfam" id="PF07974">
    <property type="entry name" value="EGF_2"/>
    <property type="match status" value="1"/>
</dbReference>
<dbReference type="Pfam" id="PF23105">
    <property type="entry name" value="EGF_integrin"/>
    <property type="match status" value="1"/>
</dbReference>
<dbReference type="Pfam" id="PF23106">
    <property type="entry name" value="EGF_Teneurin"/>
    <property type="match status" value="1"/>
</dbReference>
<dbReference type="Pfam" id="PF00362">
    <property type="entry name" value="Integrin_beta"/>
    <property type="match status" value="1"/>
</dbReference>
<dbReference type="Pfam" id="PF17205">
    <property type="entry name" value="PSI_integrin"/>
    <property type="match status" value="1"/>
</dbReference>
<dbReference type="PIRSF" id="PIRSF002512">
    <property type="entry name" value="Integrin_B"/>
    <property type="match status" value="1"/>
</dbReference>
<dbReference type="PRINTS" id="PR01186">
    <property type="entry name" value="INTEGRINB"/>
</dbReference>
<dbReference type="SMART" id="SM00187">
    <property type="entry name" value="INB"/>
    <property type="match status" value="1"/>
</dbReference>
<dbReference type="SMART" id="SM00423">
    <property type="entry name" value="PSI"/>
    <property type="match status" value="1"/>
</dbReference>
<dbReference type="SUPFAM" id="SSF57196">
    <property type="entry name" value="EGF/Laminin"/>
    <property type="match status" value="2"/>
</dbReference>
<dbReference type="SUPFAM" id="SSF69179">
    <property type="entry name" value="Integrin domains"/>
    <property type="match status" value="1"/>
</dbReference>
<dbReference type="SUPFAM" id="SSF103575">
    <property type="entry name" value="Plexin repeat"/>
    <property type="match status" value="1"/>
</dbReference>
<dbReference type="SUPFAM" id="SSF53300">
    <property type="entry name" value="vWA-like"/>
    <property type="match status" value="1"/>
</dbReference>
<dbReference type="PROSITE" id="PS00022">
    <property type="entry name" value="EGF_1"/>
    <property type="match status" value="1"/>
</dbReference>
<dbReference type="PROSITE" id="PS01186">
    <property type="entry name" value="EGF_2"/>
    <property type="match status" value="1"/>
</dbReference>
<dbReference type="PROSITE" id="PS00243">
    <property type="entry name" value="I_EGF_1"/>
    <property type="match status" value="2"/>
</dbReference>
<dbReference type="PROSITE" id="PS52047">
    <property type="entry name" value="I_EGF_2"/>
    <property type="match status" value="3"/>
</dbReference>
<gene>
    <name evidence="9" type="primary">Itgb8</name>
</gene>
<evidence type="ECO:0000250" key="1">
    <source>
        <dbReference type="UniProtKB" id="P05106"/>
    </source>
</evidence>
<evidence type="ECO:0000250" key="2">
    <source>
        <dbReference type="UniProtKB" id="P26012"/>
    </source>
</evidence>
<evidence type="ECO:0000255" key="3"/>
<evidence type="ECO:0000255" key="4">
    <source>
        <dbReference type="PROSITE-ProRule" id="PRU01392"/>
    </source>
</evidence>
<evidence type="ECO:0000269" key="5">
    <source>
    </source>
</evidence>
<evidence type="ECO:0000269" key="6">
    <source>
    </source>
</evidence>
<evidence type="ECO:0000269" key="7">
    <source>
    </source>
</evidence>
<evidence type="ECO:0000305" key="8"/>
<evidence type="ECO:0000312" key="9">
    <source>
        <dbReference type="MGI" id="MGI:1338035"/>
    </source>
</evidence>
<organism>
    <name type="scientific">Mus musculus</name>
    <name type="common">Mouse</name>
    <dbReference type="NCBI Taxonomy" id="10090"/>
    <lineage>
        <taxon>Eukaryota</taxon>
        <taxon>Metazoa</taxon>
        <taxon>Chordata</taxon>
        <taxon>Craniata</taxon>
        <taxon>Vertebrata</taxon>
        <taxon>Euteleostomi</taxon>
        <taxon>Mammalia</taxon>
        <taxon>Eutheria</taxon>
        <taxon>Euarchontoglires</taxon>
        <taxon>Glires</taxon>
        <taxon>Rodentia</taxon>
        <taxon>Myomorpha</taxon>
        <taxon>Muroidea</taxon>
        <taxon>Muridae</taxon>
        <taxon>Murinae</taxon>
        <taxon>Mus</taxon>
        <taxon>Mus</taxon>
    </lineage>
</organism>
<comment type="function">
    <text evidence="2 5 6 7">Integrin alpha-V:beta-8 (ITGAV:ITGB8) is a receptor for fibronectin (By similarity). It recognizes the sequence R-G-D in its ligands (By similarity). Integrin alpha-V:beta-6 (ITGAV:ITGB6) mediates R-G-D-dependent release of transforming growth factor beta-1 (TGF-beta-1) from regulatory Latency-associated peptide (LAP), thereby playing a key role in TGF-beta-1 activation on the surface of activated regulatory T-cells (Tregs) (PubMed:25127859). Required during vasculogenesis (PubMed:12050137, PubMed:16251442).</text>
</comment>
<comment type="subunit">
    <text evidence="7">Heterodimer of an alpha and a beta subunit (PubMed:25127859). Beta-8 (ITGB8) associates with alpha-V (ITGAV) to form ITGAV:ITGB8 (PubMed:25127859). ITGAV:ITGB8 interacts with TGFB1 (PubMed:25127859).</text>
</comment>
<comment type="subcellular location">
    <subcellularLocation>
        <location evidence="2">Cell membrane</location>
        <topology evidence="3">Single-pass type I membrane protein</topology>
    </subcellularLocation>
</comment>
<comment type="developmental stage">
    <text evidence="5">Expressed in endodermal cells surrounding endothelium in the yolk sac and in periventricular cells of the neuroepithelium in the brain.</text>
</comment>
<comment type="domain">
    <text evidence="2">The VWFA domain (or beta I domain) contains two cation-binding sites: the ligand-associated metal ion-binding site (LIMBS or SyMBS) and the metal ion-dependent adhesion site (MIDAS). Unlike in the other beta integrins, the cation-binding site adjacent MIDAS site (ADMIDAS) in ITGB8 is not functional due to the presence of two Asn residues instead of 2 Asp residues. This domain is also part of the ligand-binding site.</text>
</comment>
<comment type="disruption phenotype">
    <text evidence="5 6">Embryonic or perinatal lethality caused profound defects in vascular development (PubMed:12050137). More than half embryos die at midgestation, with evidence of insufficient vascularization of the placenta and yolk sac (PubMed:12050137). Surviving embryos die shortly after birth with extensive intracerebral hemorrhage (PubMed:12050137). Conditional deletion in the neuroepithelium results in bilateral hemorrhage at in neonates caused by endothelial cell abnormalities in the developing cortex (PubMed:16251442).</text>
</comment>
<comment type="similarity">
    <text evidence="8">Belongs to the integrin beta chain family.</text>
</comment>